<evidence type="ECO:0000255" key="1">
    <source>
        <dbReference type="HAMAP-Rule" id="MF_00154"/>
    </source>
</evidence>
<accession>A1RRA6</accession>
<feature type="chain" id="PRO_0000346094" description="Protoheme IX farnesyltransferase">
    <location>
        <begin position="1"/>
        <end position="278"/>
    </location>
</feature>
<feature type="transmembrane region" description="Helical" evidence="1">
    <location>
        <begin position="12"/>
        <end position="32"/>
    </location>
</feature>
<feature type="transmembrane region" description="Helical" evidence="1">
    <location>
        <begin position="33"/>
        <end position="53"/>
    </location>
</feature>
<feature type="transmembrane region" description="Helical" evidence="1">
    <location>
        <begin position="83"/>
        <end position="103"/>
    </location>
</feature>
<feature type="transmembrane region" description="Helical" evidence="1">
    <location>
        <begin position="105"/>
        <end position="125"/>
    </location>
</feature>
<feature type="transmembrane region" description="Helical" evidence="1">
    <location>
        <begin position="130"/>
        <end position="150"/>
    </location>
</feature>
<feature type="transmembrane region" description="Helical" evidence="1">
    <location>
        <begin position="157"/>
        <end position="177"/>
    </location>
</feature>
<feature type="transmembrane region" description="Helical" evidence="1">
    <location>
        <begin position="204"/>
        <end position="224"/>
    </location>
</feature>
<feature type="transmembrane region" description="Helical" evidence="1">
    <location>
        <begin position="228"/>
        <end position="248"/>
    </location>
</feature>
<feature type="transmembrane region" description="Helical" evidence="1">
    <location>
        <begin position="257"/>
        <end position="277"/>
    </location>
</feature>
<protein>
    <recommendedName>
        <fullName evidence="1">Protoheme IX farnesyltransferase</fullName>
        <ecNumber evidence="1">2.5.1.141</ecNumber>
    </recommendedName>
    <alternativeName>
        <fullName evidence="1">Heme B farnesyltransferase</fullName>
    </alternativeName>
    <alternativeName>
        <fullName evidence="1">Heme O synthase</fullName>
    </alternativeName>
</protein>
<comment type="function">
    <text evidence="1">Converts heme B (protoheme IX) to heme O by substitution of the vinyl group on carbon 2 of heme B porphyrin ring with a hydroxyethyl farnesyl side group.</text>
</comment>
<comment type="catalytic activity">
    <reaction evidence="1">
        <text>heme b + (2E,6E)-farnesyl diphosphate + H2O = Fe(II)-heme o + diphosphate</text>
        <dbReference type="Rhea" id="RHEA:28070"/>
        <dbReference type="ChEBI" id="CHEBI:15377"/>
        <dbReference type="ChEBI" id="CHEBI:33019"/>
        <dbReference type="ChEBI" id="CHEBI:60344"/>
        <dbReference type="ChEBI" id="CHEBI:60530"/>
        <dbReference type="ChEBI" id="CHEBI:175763"/>
        <dbReference type="EC" id="2.5.1.141"/>
    </reaction>
</comment>
<comment type="pathway">
    <text evidence="1">Porphyrin-containing compound metabolism; heme O biosynthesis; heme O from protoheme: step 1/1.</text>
</comment>
<comment type="subcellular location">
    <subcellularLocation>
        <location evidence="1">Cell membrane</location>
        <topology evidence="1">Multi-pass membrane protein</topology>
    </subcellularLocation>
</comment>
<comment type="miscellaneous">
    <text evidence="1">Carbon 2 of the heme B porphyrin ring is defined according to the Fischer nomenclature.</text>
</comment>
<comment type="similarity">
    <text evidence="1">Belongs to the UbiA prenyltransferase family. Protoheme IX farnesyltransferase subfamily.</text>
</comment>
<sequence length="278" mass="30414">MNPYIVLLKPRVIWLLILSSVVGYIYAAQTVDWSKLIALIAVATLAVGGSAAFNHYWERDIDAAMSRTARRPLPAGLIPEFNALVYSLALSAAGITLSFYLLGPLPGLFVALGWFFYAVVYTIWLKRKTWLNILGGGFAGNATFLGGYALGKGTVDLPAVLISFAIYLWIPSHIWALAYKYRHDYRKAGVPMLPAIIDEKKSVVIISILNIASAVYILWLYLAFGQSLLGLALVFAGVAGTVATSILALKEKSDRAMWKMYKASSPILTLFLLALVFS</sequence>
<gene>
    <name evidence="1" type="primary">ctaB</name>
    <name type="ordered locus">Pisl_0310</name>
</gene>
<reference key="1">
    <citation type="submission" date="2006-12" db="EMBL/GenBank/DDBJ databases">
        <title>Complete sequence of Pyrobaculum islandicum DSM 4184.</title>
        <authorList>
            <person name="Copeland A."/>
            <person name="Lucas S."/>
            <person name="Lapidus A."/>
            <person name="Barry K."/>
            <person name="Detter J.C."/>
            <person name="Glavina del Rio T."/>
            <person name="Dalin E."/>
            <person name="Tice H."/>
            <person name="Pitluck S."/>
            <person name="Meincke L."/>
            <person name="Brettin T."/>
            <person name="Bruce D."/>
            <person name="Han C."/>
            <person name="Tapia R."/>
            <person name="Gilna P."/>
            <person name="Schmutz J."/>
            <person name="Larimer F."/>
            <person name="Land M."/>
            <person name="Hauser L."/>
            <person name="Kyrpides N."/>
            <person name="Mikhailova N."/>
            <person name="Cozen A.E."/>
            <person name="Fitz-Gibbon S.T."/>
            <person name="House C.H."/>
            <person name="Saltikov C."/>
            <person name="Lowe T."/>
            <person name="Richardson P."/>
        </authorList>
    </citation>
    <scope>NUCLEOTIDE SEQUENCE [LARGE SCALE GENOMIC DNA]</scope>
    <source>
        <strain>DSM 4184 / JCM 9189 / GEO3</strain>
    </source>
</reference>
<name>COXX_PYRIL</name>
<proteinExistence type="inferred from homology"/>
<organism>
    <name type="scientific">Pyrobaculum islandicum (strain DSM 4184 / JCM 9189 / GEO3)</name>
    <dbReference type="NCBI Taxonomy" id="384616"/>
    <lineage>
        <taxon>Archaea</taxon>
        <taxon>Thermoproteota</taxon>
        <taxon>Thermoprotei</taxon>
        <taxon>Thermoproteales</taxon>
        <taxon>Thermoproteaceae</taxon>
        <taxon>Pyrobaculum</taxon>
    </lineage>
</organism>
<dbReference type="EC" id="2.5.1.141" evidence="1"/>
<dbReference type="EMBL" id="CP000504">
    <property type="protein sequence ID" value="ABL87488.1"/>
    <property type="molecule type" value="Genomic_DNA"/>
</dbReference>
<dbReference type="RefSeq" id="WP_011762065.1">
    <property type="nucleotide sequence ID" value="NC_008701.1"/>
</dbReference>
<dbReference type="SMR" id="A1RRA6"/>
<dbReference type="STRING" id="384616.Pisl_0310"/>
<dbReference type="GeneID" id="4616575"/>
<dbReference type="KEGG" id="pis:Pisl_0310"/>
<dbReference type="eggNOG" id="arCOG00479">
    <property type="taxonomic scope" value="Archaea"/>
</dbReference>
<dbReference type="HOGENOM" id="CLU_029631_0_1_2"/>
<dbReference type="OrthoDB" id="131615at2157"/>
<dbReference type="UniPathway" id="UPA00834">
    <property type="reaction ID" value="UER00712"/>
</dbReference>
<dbReference type="Proteomes" id="UP000002595">
    <property type="component" value="Chromosome"/>
</dbReference>
<dbReference type="GO" id="GO:0005886">
    <property type="term" value="C:plasma membrane"/>
    <property type="evidence" value="ECO:0007669"/>
    <property type="project" value="UniProtKB-SubCell"/>
</dbReference>
<dbReference type="GO" id="GO:0008495">
    <property type="term" value="F:protoheme IX farnesyltransferase activity"/>
    <property type="evidence" value="ECO:0007669"/>
    <property type="project" value="UniProtKB-UniRule"/>
</dbReference>
<dbReference type="GO" id="GO:0048034">
    <property type="term" value="P:heme O biosynthetic process"/>
    <property type="evidence" value="ECO:0007669"/>
    <property type="project" value="UniProtKB-UniRule"/>
</dbReference>
<dbReference type="CDD" id="cd13957">
    <property type="entry name" value="PT_UbiA_Cox10"/>
    <property type="match status" value="1"/>
</dbReference>
<dbReference type="Gene3D" id="1.10.357.140">
    <property type="entry name" value="UbiA prenyltransferase"/>
    <property type="match status" value="1"/>
</dbReference>
<dbReference type="HAMAP" id="MF_00154">
    <property type="entry name" value="CyoE_CtaB"/>
    <property type="match status" value="1"/>
</dbReference>
<dbReference type="InterPro" id="IPR006369">
    <property type="entry name" value="Protohaem_IX_farnesylTrfase"/>
</dbReference>
<dbReference type="InterPro" id="IPR000537">
    <property type="entry name" value="UbiA_prenyltransferase"/>
</dbReference>
<dbReference type="InterPro" id="IPR030470">
    <property type="entry name" value="UbiA_prenylTrfase_CS"/>
</dbReference>
<dbReference type="InterPro" id="IPR044878">
    <property type="entry name" value="UbiA_sf"/>
</dbReference>
<dbReference type="NCBIfam" id="TIGR01473">
    <property type="entry name" value="cyoE_ctaB"/>
    <property type="match status" value="1"/>
</dbReference>
<dbReference type="PANTHER" id="PTHR43448">
    <property type="entry name" value="PROTOHEME IX FARNESYLTRANSFERASE, MITOCHONDRIAL"/>
    <property type="match status" value="1"/>
</dbReference>
<dbReference type="PANTHER" id="PTHR43448:SF2">
    <property type="entry name" value="PROTOHEME IX FARNESYLTRANSFERASE, MITOCHONDRIAL"/>
    <property type="match status" value="1"/>
</dbReference>
<dbReference type="Pfam" id="PF01040">
    <property type="entry name" value="UbiA"/>
    <property type="match status" value="1"/>
</dbReference>
<dbReference type="PROSITE" id="PS00943">
    <property type="entry name" value="UBIA"/>
    <property type="match status" value="1"/>
</dbReference>
<keyword id="KW-1003">Cell membrane</keyword>
<keyword id="KW-0350">Heme biosynthesis</keyword>
<keyword id="KW-0472">Membrane</keyword>
<keyword id="KW-0808">Transferase</keyword>
<keyword id="KW-0812">Transmembrane</keyword>
<keyword id="KW-1133">Transmembrane helix</keyword>